<proteinExistence type="inferred from homology"/>
<evidence type="ECO:0000255" key="1">
    <source>
        <dbReference type="HAMAP-Rule" id="MF_00248"/>
    </source>
</evidence>
<organism>
    <name type="scientific">Magnetococcus marinus (strain ATCC BAA-1437 / JCM 17883 / MC-1)</name>
    <dbReference type="NCBI Taxonomy" id="156889"/>
    <lineage>
        <taxon>Bacteria</taxon>
        <taxon>Pseudomonadati</taxon>
        <taxon>Pseudomonadota</taxon>
        <taxon>Alphaproteobacteria</taxon>
        <taxon>Magnetococcales</taxon>
        <taxon>Magnetococcaceae</taxon>
        <taxon>Magnetococcus</taxon>
    </lineage>
</organism>
<sequence length="178" mass="18954">MFKGTTILSVRRGNHVVMGGDGQVSIGNTVAKSNARKVRLMSDGKVLAGFAGSTADAFTLFERFEGKLSKHGGNLTRAAVEMAKDWRTDRVLRRLEAMLAVADEHCSLLISGNGDVLEPEEGVIAIGSGGPYALSAARALLRHTSLNPRQIVESSLEVAAEICVFTNNNLTIEELGGE</sequence>
<protein>
    <recommendedName>
        <fullName evidence="1">ATP-dependent protease subunit HslV</fullName>
        <ecNumber evidence="1">3.4.25.2</ecNumber>
    </recommendedName>
</protein>
<accession>A0L3K3</accession>
<name>HSLV_MAGMM</name>
<reference key="1">
    <citation type="journal article" date="2009" name="Appl. Environ. Microbiol.">
        <title>Complete genome sequence of the chemolithoautotrophic marine magnetotactic coccus strain MC-1.</title>
        <authorList>
            <person name="Schubbe S."/>
            <person name="Williams T.J."/>
            <person name="Xie G."/>
            <person name="Kiss H.E."/>
            <person name="Brettin T.S."/>
            <person name="Martinez D."/>
            <person name="Ross C.A."/>
            <person name="Schuler D."/>
            <person name="Cox B.L."/>
            <person name="Nealson K.H."/>
            <person name="Bazylinski D.A."/>
        </authorList>
    </citation>
    <scope>NUCLEOTIDE SEQUENCE [LARGE SCALE GENOMIC DNA]</scope>
    <source>
        <strain>ATCC BAA-1437 / JCM 17883 / MC-1</strain>
    </source>
</reference>
<keyword id="KW-0021">Allosteric enzyme</keyword>
<keyword id="KW-0963">Cytoplasm</keyword>
<keyword id="KW-0378">Hydrolase</keyword>
<keyword id="KW-0479">Metal-binding</keyword>
<keyword id="KW-0645">Protease</keyword>
<keyword id="KW-1185">Reference proteome</keyword>
<keyword id="KW-0915">Sodium</keyword>
<keyword id="KW-0888">Threonine protease</keyword>
<comment type="function">
    <text evidence="1">Protease subunit of a proteasome-like degradation complex believed to be a general protein degrading machinery.</text>
</comment>
<comment type="catalytic activity">
    <reaction evidence="1">
        <text>ATP-dependent cleavage of peptide bonds with broad specificity.</text>
        <dbReference type="EC" id="3.4.25.2"/>
    </reaction>
</comment>
<comment type="activity regulation">
    <text evidence="1">Allosterically activated by HslU binding.</text>
</comment>
<comment type="subunit">
    <text evidence="1">A double ring-shaped homohexamer of HslV is capped on each side by a ring-shaped HslU homohexamer. The assembly of the HslU/HslV complex is dependent on binding of ATP.</text>
</comment>
<comment type="subcellular location">
    <subcellularLocation>
        <location evidence="1">Cytoplasm</location>
    </subcellularLocation>
</comment>
<comment type="similarity">
    <text evidence="1">Belongs to the peptidase T1B family. HslV subfamily.</text>
</comment>
<gene>
    <name evidence="1" type="primary">hslV</name>
    <name type="ordered locus">Mmc1_0017</name>
</gene>
<dbReference type="EC" id="3.4.25.2" evidence="1"/>
<dbReference type="EMBL" id="CP000471">
    <property type="protein sequence ID" value="ABK42546.1"/>
    <property type="molecule type" value="Genomic_DNA"/>
</dbReference>
<dbReference type="RefSeq" id="WP_011711720.1">
    <property type="nucleotide sequence ID" value="NC_008576.1"/>
</dbReference>
<dbReference type="SMR" id="A0L3K3"/>
<dbReference type="STRING" id="156889.Mmc1_0017"/>
<dbReference type="MEROPS" id="T01.006"/>
<dbReference type="KEGG" id="mgm:Mmc1_0017"/>
<dbReference type="eggNOG" id="COG5405">
    <property type="taxonomic scope" value="Bacteria"/>
</dbReference>
<dbReference type="HOGENOM" id="CLU_093872_1_0_5"/>
<dbReference type="OrthoDB" id="9804884at2"/>
<dbReference type="Proteomes" id="UP000002586">
    <property type="component" value="Chromosome"/>
</dbReference>
<dbReference type="GO" id="GO:0009376">
    <property type="term" value="C:HslUV protease complex"/>
    <property type="evidence" value="ECO:0007669"/>
    <property type="project" value="UniProtKB-UniRule"/>
</dbReference>
<dbReference type="GO" id="GO:0005839">
    <property type="term" value="C:proteasome core complex"/>
    <property type="evidence" value="ECO:0007669"/>
    <property type="project" value="InterPro"/>
</dbReference>
<dbReference type="GO" id="GO:0046872">
    <property type="term" value="F:metal ion binding"/>
    <property type="evidence" value="ECO:0007669"/>
    <property type="project" value="UniProtKB-KW"/>
</dbReference>
<dbReference type="GO" id="GO:0004298">
    <property type="term" value="F:threonine-type endopeptidase activity"/>
    <property type="evidence" value="ECO:0007669"/>
    <property type="project" value="UniProtKB-KW"/>
</dbReference>
<dbReference type="GO" id="GO:0051603">
    <property type="term" value="P:proteolysis involved in protein catabolic process"/>
    <property type="evidence" value="ECO:0007669"/>
    <property type="project" value="InterPro"/>
</dbReference>
<dbReference type="CDD" id="cd01913">
    <property type="entry name" value="protease_HslV"/>
    <property type="match status" value="1"/>
</dbReference>
<dbReference type="FunFam" id="3.60.20.10:FF:000002">
    <property type="entry name" value="ATP-dependent protease subunit HslV"/>
    <property type="match status" value="1"/>
</dbReference>
<dbReference type="Gene3D" id="3.60.20.10">
    <property type="entry name" value="Glutamine Phosphoribosylpyrophosphate, subunit 1, domain 1"/>
    <property type="match status" value="1"/>
</dbReference>
<dbReference type="HAMAP" id="MF_00248">
    <property type="entry name" value="HslV"/>
    <property type="match status" value="1"/>
</dbReference>
<dbReference type="InterPro" id="IPR022281">
    <property type="entry name" value="ATP-dep_Prtase_HsIV_su"/>
</dbReference>
<dbReference type="InterPro" id="IPR029055">
    <property type="entry name" value="Ntn_hydrolases_N"/>
</dbReference>
<dbReference type="InterPro" id="IPR001353">
    <property type="entry name" value="Proteasome_sua/b"/>
</dbReference>
<dbReference type="InterPro" id="IPR023333">
    <property type="entry name" value="Proteasome_suB-type"/>
</dbReference>
<dbReference type="NCBIfam" id="TIGR03692">
    <property type="entry name" value="ATP_dep_HslV"/>
    <property type="match status" value="1"/>
</dbReference>
<dbReference type="NCBIfam" id="NF003964">
    <property type="entry name" value="PRK05456.1"/>
    <property type="match status" value="1"/>
</dbReference>
<dbReference type="PANTHER" id="PTHR32194:SF0">
    <property type="entry name" value="ATP-DEPENDENT PROTEASE SUBUNIT HSLV"/>
    <property type="match status" value="1"/>
</dbReference>
<dbReference type="PANTHER" id="PTHR32194">
    <property type="entry name" value="METALLOPROTEASE TLDD"/>
    <property type="match status" value="1"/>
</dbReference>
<dbReference type="Pfam" id="PF00227">
    <property type="entry name" value="Proteasome"/>
    <property type="match status" value="1"/>
</dbReference>
<dbReference type="PIRSF" id="PIRSF039093">
    <property type="entry name" value="HslV"/>
    <property type="match status" value="1"/>
</dbReference>
<dbReference type="SUPFAM" id="SSF56235">
    <property type="entry name" value="N-terminal nucleophile aminohydrolases (Ntn hydrolases)"/>
    <property type="match status" value="1"/>
</dbReference>
<dbReference type="PROSITE" id="PS51476">
    <property type="entry name" value="PROTEASOME_BETA_2"/>
    <property type="match status" value="1"/>
</dbReference>
<feature type="chain" id="PRO_0000336778" description="ATP-dependent protease subunit HslV">
    <location>
        <begin position="1"/>
        <end position="178"/>
    </location>
</feature>
<feature type="active site" evidence="1">
    <location>
        <position position="5"/>
    </location>
</feature>
<feature type="binding site" evidence="1">
    <location>
        <position position="160"/>
    </location>
    <ligand>
        <name>Na(+)</name>
        <dbReference type="ChEBI" id="CHEBI:29101"/>
    </ligand>
</feature>
<feature type="binding site" evidence="1">
    <location>
        <position position="163"/>
    </location>
    <ligand>
        <name>Na(+)</name>
        <dbReference type="ChEBI" id="CHEBI:29101"/>
    </ligand>
</feature>
<feature type="binding site" evidence="1">
    <location>
        <position position="166"/>
    </location>
    <ligand>
        <name>Na(+)</name>
        <dbReference type="ChEBI" id="CHEBI:29101"/>
    </ligand>
</feature>